<protein>
    <recommendedName>
        <fullName evidence="1">Cytochrome c-type biogenesis protein CcmE</fullName>
    </recommendedName>
    <alternativeName>
        <fullName evidence="1">Cytochrome c maturation protein E</fullName>
    </alternativeName>
    <alternativeName>
        <fullName evidence="1">Heme chaperone CcmE</fullName>
    </alternativeName>
</protein>
<proteinExistence type="inferred from homology"/>
<keyword id="KW-0997">Cell inner membrane</keyword>
<keyword id="KW-1003">Cell membrane</keyword>
<keyword id="KW-0201">Cytochrome c-type biogenesis</keyword>
<keyword id="KW-0349">Heme</keyword>
<keyword id="KW-0408">Iron</keyword>
<keyword id="KW-0472">Membrane</keyword>
<keyword id="KW-0479">Metal-binding</keyword>
<keyword id="KW-0735">Signal-anchor</keyword>
<keyword id="KW-0812">Transmembrane</keyword>
<keyword id="KW-1133">Transmembrane helix</keyword>
<dbReference type="EMBL" id="CP000488">
    <property type="protein sequence ID" value="ABL02401.1"/>
    <property type="molecule type" value="Genomic_DNA"/>
</dbReference>
<dbReference type="SMR" id="A1AWU4"/>
<dbReference type="STRING" id="413404.Rmag_0659"/>
<dbReference type="KEGG" id="rma:Rmag_0659"/>
<dbReference type="eggNOG" id="COG2332">
    <property type="taxonomic scope" value="Bacteria"/>
</dbReference>
<dbReference type="HOGENOM" id="CLU_079503_1_1_6"/>
<dbReference type="OrthoDB" id="9793584at2"/>
<dbReference type="Proteomes" id="UP000002587">
    <property type="component" value="Chromosome"/>
</dbReference>
<dbReference type="GO" id="GO:0005886">
    <property type="term" value="C:plasma membrane"/>
    <property type="evidence" value="ECO:0007669"/>
    <property type="project" value="UniProtKB-SubCell"/>
</dbReference>
<dbReference type="GO" id="GO:0020037">
    <property type="term" value="F:heme binding"/>
    <property type="evidence" value="ECO:0007669"/>
    <property type="project" value="InterPro"/>
</dbReference>
<dbReference type="GO" id="GO:0046872">
    <property type="term" value="F:metal ion binding"/>
    <property type="evidence" value="ECO:0007669"/>
    <property type="project" value="UniProtKB-KW"/>
</dbReference>
<dbReference type="GO" id="GO:0017004">
    <property type="term" value="P:cytochrome complex assembly"/>
    <property type="evidence" value="ECO:0007669"/>
    <property type="project" value="UniProtKB-KW"/>
</dbReference>
<dbReference type="Gene3D" id="2.40.50.140">
    <property type="entry name" value="Nucleic acid-binding proteins"/>
    <property type="match status" value="1"/>
</dbReference>
<dbReference type="HAMAP" id="MF_01959">
    <property type="entry name" value="CcmE"/>
    <property type="match status" value="1"/>
</dbReference>
<dbReference type="InterPro" id="IPR004329">
    <property type="entry name" value="CcmE"/>
</dbReference>
<dbReference type="InterPro" id="IPR036127">
    <property type="entry name" value="CcmE-like_sf"/>
</dbReference>
<dbReference type="InterPro" id="IPR012340">
    <property type="entry name" value="NA-bd_OB-fold"/>
</dbReference>
<dbReference type="NCBIfam" id="NF009727">
    <property type="entry name" value="PRK13254.1-1"/>
    <property type="match status" value="1"/>
</dbReference>
<dbReference type="NCBIfam" id="NF009729">
    <property type="entry name" value="PRK13254.1-3"/>
    <property type="match status" value="1"/>
</dbReference>
<dbReference type="NCBIfam" id="NF009731">
    <property type="entry name" value="PRK13254.1-5"/>
    <property type="match status" value="1"/>
</dbReference>
<dbReference type="PANTHER" id="PTHR34128">
    <property type="entry name" value="CYTOCHROME C-TYPE BIOGENESIS PROTEIN CCME HOMOLOG, MITOCHONDRIAL"/>
    <property type="match status" value="1"/>
</dbReference>
<dbReference type="PANTHER" id="PTHR34128:SF2">
    <property type="entry name" value="CYTOCHROME C-TYPE BIOGENESIS PROTEIN CCME HOMOLOG, MITOCHONDRIAL"/>
    <property type="match status" value="1"/>
</dbReference>
<dbReference type="Pfam" id="PF03100">
    <property type="entry name" value="CcmE"/>
    <property type="match status" value="1"/>
</dbReference>
<dbReference type="SUPFAM" id="SSF82093">
    <property type="entry name" value="Heme chaperone CcmE"/>
    <property type="match status" value="1"/>
</dbReference>
<organism>
    <name type="scientific">Ruthia magnifica subsp. Calyptogena magnifica</name>
    <dbReference type="NCBI Taxonomy" id="413404"/>
    <lineage>
        <taxon>Bacteria</taxon>
        <taxon>Pseudomonadati</taxon>
        <taxon>Pseudomonadota</taxon>
        <taxon>Gammaproteobacteria</taxon>
        <taxon>Candidatus Pseudothioglobaceae</taxon>
        <taxon>Candidatus Ruthturnera</taxon>
    </lineage>
</organism>
<evidence type="ECO:0000255" key="1">
    <source>
        <dbReference type="HAMAP-Rule" id="MF_01959"/>
    </source>
</evidence>
<feature type="chain" id="PRO_1000070848" description="Cytochrome c-type biogenesis protein CcmE">
    <location>
        <begin position="1"/>
        <end position="139"/>
    </location>
</feature>
<feature type="topological domain" description="Cytoplasmic" evidence="1">
    <location>
        <begin position="1"/>
        <end position="7"/>
    </location>
</feature>
<feature type="transmembrane region" description="Helical; Signal-anchor for type II membrane protein" evidence="1">
    <location>
        <begin position="8"/>
        <end position="28"/>
    </location>
</feature>
<feature type="topological domain" description="Periplasmic" evidence="1">
    <location>
        <begin position="29"/>
        <end position="139"/>
    </location>
</feature>
<feature type="binding site" description="covalent" evidence="1">
    <location>
        <position position="120"/>
    </location>
    <ligand>
        <name>heme</name>
        <dbReference type="ChEBI" id="CHEBI:30413"/>
    </ligand>
</feature>
<feature type="binding site" description="axial binding residue" evidence="1">
    <location>
        <position position="124"/>
    </location>
    <ligand>
        <name>heme</name>
        <dbReference type="ChEBI" id="CHEBI:30413"/>
    </ligand>
    <ligandPart>
        <name>Fe</name>
        <dbReference type="ChEBI" id="CHEBI:18248"/>
    </ligandPart>
</feature>
<gene>
    <name evidence="1" type="primary">ccmE</name>
    <name evidence="1" type="synonym">cycJ</name>
    <name type="ordered locus">Rmag_0659</name>
</gene>
<name>CCME_RUTMC</name>
<reference key="1">
    <citation type="journal article" date="2007" name="Science">
        <title>The Calyptogena magnifica chemoautotrophic symbiont genome.</title>
        <authorList>
            <person name="Newton I.L.G."/>
            <person name="Woyke T."/>
            <person name="Auchtung T.A."/>
            <person name="Dilly G.F."/>
            <person name="Dutton R.J."/>
            <person name="Fisher M.C."/>
            <person name="Fontanez K.M."/>
            <person name="Lau E."/>
            <person name="Stewart F.J."/>
            <person name="Richardson P.M."/>
            <person name="Barry K.W."/>
            <person name="Saunders E."/>
            <person name="Detter J.C."/>
            <person name="Wu D."/>
            <person name="Eisen J.A."/>
            <person name="Cavanaugh C.M."/>
        </authorList>
    </citation>
    <scope>NUCLEOTIDE SEQUENCE [LARGE SCALE GENOMIC DNA]</scope>
</reference>
<sequence>MTKRQNRMTLVALLVIGVSLTGYLGLKAFNENLLYFFSPTDVTEGKAPKGKSFRLGGMVAKNSVKRDGVKVTFDVTDYVNTFRVNYSGILPDLFKEGQGIITTGSLINGIFIATEVLAKHDESYMPPEVADALEKAKNK</sequence>
<comment type="function">
    <text evidence="1">Heme chaperone required for the biogenesis of c-type cytochromes. Transiently binds heme delivered by CcmC and transfers the heme to apo-cytochromes in a process facilitated by CcmF and CcmH.</text>
</comment>
<comment type="subcellular location">
    <subcellularLocation>
        <location evidence="1">Cell inner membrane</location>
        <topology evidence="1">Single-pass type II membrane protein</topology>
        <orientation evidence="1">Periplasmic side</orientation>
    </subcellularLocation>
</comment>
<comment type="similarity">
    <text evidence="1">Belongs to the CcmE/CycJ family.</text>
</comment>
<accession>A1AWU4</accession>